<evidence type="ECO:0000255" key="1">
    <source>
        <dbReference type="HAMAP-Rule" id="MF_00624"/>
    </source>
</evidence>
<name>GLGC_STRZJ</name>
<protein>
    <recommendedName>
        <fullName evidence="1">Glucose-1-phosphate adenylyltransferase</fullName>
        <ecNumber evidence="1">2.7.7.27</ecNumber>
    </recommendedName>
    <alternativeName>
        <fullName evidence="1">ADP-glucose pyrophosphorylase</fullName>
        <shortName evidence="1">ADPGlc PPase</shortName>
    </alternativeName>
    <alternativeName>
        <fullName evidence="1">ADP-glucose synthase</fullName>
    </alternativeName>
</protein>
<keyword id="KW-0067">ATP-binding</keyword>
<keyword id="KW-0119">Carbohydrate metabolism</keyword>
<keyword id="KW-0320">Glycogen biosynthesis</keyword>
<keyword id="KW-0321">Glycogen metabolism</keyword>
<keyword id="KW-0547">Nucleotide-binding</keyword>
<keyword id="KW-0548">Nucleotidyltransferase</keyword>
<keyword id="KW-0808">Transferase</keyword>
<proteinExistence type="inferred from homology"/>
<organism>
    <name type="scientific">Streptococcus pneumoniae (strain JJA)</name>
    <dbReference type="NCBI Taxonomy" id="488222"/>
    <lineage>
        <taxon>Bacteria</taxon>
        <taxon>Bacillati</taxon>
        <taxon>Bacillota</taxon>
        <taxon>Bacilli</taxon>
        <taxon>Lactobacillales</taxon>
        <taxon>Streptococcaceae</taxon>
        <taxon>Streptococcus</taxon>
    </lineage>
</organism>
<reference key="1">
    <citation type="journal article" date="2010" name="Genome Biol.">
        <title>Structure and dynamics of the pan-genome of Streptococcus pneumoniae and closely related species.</title>
        <authorList>
            <person name="Donati C."/>
            <person name="Hiller N.L."/>
            <person name="Tettelin H."/>
            <person name="Muzzi A."/>
            <person name="Croucher N.J."/>
            <person name="Angiuoli S.V."/>
            <person name="Oggioni M."/>
            <person name="Dunning Hotopp J.C."/>
            <person name="Hu F.Z."/>
            <person name="Riley D.R."/>
            <person name="Covacci A."/>
            <person name="Mitchell T.J."/>
            <person name="Bentley S.D."/>
            <person name="Kilian M."/>
            <person name="Ehrlich G.D."/>
            <person name="Rappuoli R."/>
            <person name="Moxon E.R."/>
            <person name="Masignani V."/>
        </authorList>
    </citation>
    <scope>NUCLEOTIDE SEQUENCE [LARGE SCALE GENOMIC DNA]</scope>
    <source>
        <strain>JJA</strain>
    </source>
</reference>
<gene>
    <name evidence="1" type="primary">glgC</name>
    <name type="ordered locus">SPJ_1059</name>
</gene>
<comment type="function">
    <text evidence="1">Involved in the biosynthesis of ADP-glucose, a building block required for the elongation reactions to produce glycogen. Catalyzes the reaction between ATP and alpha-D-glucose 1-phosphate (G1P) to produce pyrophosphate and ADP-Glc.</text>
</comment>
<comment type="catalytic activity">
    <reaction evidence="1">
        <text>alpha-D-glucose 1-phosphate + ATP + H(+) = ADP-alpha-D-glucose + diphosphate</text>
        <dbReference type="Rhea" id="RHEA:12120"/>
        <dbReference type="ChEBI" id="CHEBI:15378"/>
        <dbReference type="ChEBI" id="CHEBI:30616"/>
        <dbReference type="ChEBI" id="CHEBI:33019"/>
        <dbReference type="ChEBI" id="CHEBI:57498"/>
        <dbReference type="ChEBI" id="CHEBI:58601"/>
        <dbReference type="EC" id="2.7.7.27"/>
    </reaction>
</comment>
<comment type="pathway">
    <text evidence="1">Glycan biosynthesis; glycogen biosynthesis.</text>
</comment>
<comment type="subunit">
    <text evidence="1">Homotetramer.</text>
</comment>
<comment type="similarity">
    <text evidence="1">Belongs to the bacterial/plant glucose-1-phosphate adenylyltransferase family.</text>
</comment>
<dbReference type="EC" id="2.7.7.27" evidence="1"/>
<dbReference type="EMBL" id="CP000919">
    <property type="protein sequence ID" value="ACO18489.1"/>
    <property type="molecule type" value="Genomic_DNA"/>
</dbReference>
<dbReference type="RefSeq" id="WP_000787276.1">
    <property type="nucleotide sequence ID" value="NC_012466.1"/>
</dbReference>
<dbReference type="SMR" id="C1CEA8"/>
<dbReference type="KEGG" id="sjj:SPJ_1059"/>
<dbReference type="HOGENOM" id="CLU_029499_14_0_9"/>
<dbReference type="UniPathway" id="UPA00164"/>
<dbReference type="Proteomes" id="UP000002206">
    <property type="component" value="Chromosome"/>
</dbReference>
<dbReference type="GO" id="GO:0005524">
    <property type="term" value="F:ATP binding"/>
    <property type="evidence" value="ECO:0007669"/>
    <property type="project" value="UniProtKB-KW"/>
</dbReference>
<dbReference type="GO" id="GO:0008878">
    <property type="term" value="F:glucose-1-phosphate adenylyltransferase activity"/>
    <property type="evidence" value="ECO:0007669"/>
    <property type="project" value="UniProtKB-UniRule"/>
</dbReference>
<dbReference type="GO" id="GO:0005978">
    <property type="term" value="P:glycogen biosynthetic process"/>
    <property type="evidence" value="ECO:0007669"/>
    <property type="project" value="UniProtKB-UniRule"/>
</dbReference>
<dbReference type="CDD" id="cd02508">
    <property type="entry name" value="ADP_Glucose_PP"/>
    <property type="match status" value="1"/>
</dbReference>
<dbReference type="CDD" id="cd04651">
    <property type="entry name" value="LbH_G1P_AT_C"/>
    <property type="match status" value="1"/>
</dbReference>
<dbReference type="Gene3D" id="2.160.10.10">
    <property type="entry name" value="Hexapeptide repeat proteins"/>
    <property type="match status" value="1"/>
</dbReference>
<dbReference type="Gene3D" id="3.90.550.10">
    <property type="entry name" value="Spore Coat Polysaccharide Biosynthesis Protein SpsA, Chain A"/>
    <property type="match status" value="1"/>
</dbReference>
<dbReference type="HAMAP" id="MF_00624">
    <property type="entry name" value="GlgC"/>
    <property type="match status" value="1"/>
</dbReference>
<dbReference type="InterPro" id="IPR011831">
    <property type="entry name" value="ADP-Glc_PPase"/>
</dbReference>
<dbReference type="InterPro" id="IPR005836">
    <property type="entry name" value="ADP_Glu_pyroP_CS"/>
</dbReference>
<dbReference type="InterPro" id="IPR023049">
    <property type="entry name" value="GlgC_bac"/>
</dbReference>
<dbReference type="InterPro" id="IPR056818">
    <property type="entry name" value="GlmU/GlgC-like_hexapep"/>
</dbReference>
<dbReference type="InterPro" id="IPR005835">
    <property type="entry name" value="NTP_transferase_dom"/>
</dbReference>
<dbReference type="InterPro" id="IPR029044">
    <property type="entry name" value="Nucleotide-diphossugar_trans"/>
</dbReference>
<dbReference type="InterPro" id="IPR011004">
    <property type="entry name" value="Trimer_LpxA-like_sf"/>
</dbReference>
<dbReference type="NCBIfam" id="TIGR02091">
    <property type="entry name" value="glgC"/>
    <property type="match status" value="1"/>
</dbReference>
<dbReference type="NCBIfam" id="NF003670">
    <property type="entry name" value="PRK05293.1"/>
    <property type="match status" value="1"/>
</dbReference>
<dbReference type="PANTHER" id="PTHR43523:SF2">
    <property type="entry name" value="GLUCOSE-1-PHOSPHATE ADENYLYLTRANSFERASE"/>
    <property type="match status" value="1"/>
</dbReference>
<dbReference type="PANTHER" id="PTHR43523">
    <property type="entry name" value="GLUCOSE-1-PHOSPHATE ADENYLYLTRANSFERASE-RELATED"/>
    <property type="match status" value="1"/>
</dbReference>
<dbReference type="Pfam" id="PF24894">
    <property type="entry name" value="Hexapep_GlmU"/>
    <property type="match status" value="1"/>
</dbReference>
<dbReference type="Pfam" id="PF00483">
    <property type="entry name" value="NTP_transferase"/>
    <property type="match status" value="1"/>
</dbReference>
<dbReference type="SUPFAM" id="SSF53448">
    <property type="entry name" value="Nucleotide-diphospho-sugar transferases"/>
    <property type="match status" value="1"/>
</dbReference>
<dbReference type="SUPFAM" id="SSF51161">
    <property type="entry name" value="Trimeric LpxA-like enzymes"/>
    <property type="match status" value="1"/>
</dbReference>
<dbReference type="PROSITE" id="PS00808">
    <property type="entry name" value="ADP_GLC_PYROPHOSPH_1"/>
    <property type="match status" value="1"/>
</dbReference>
<dbReference type="PROSITE" id="PS00809">
    <property type="entry name" value="ADP_GLC_PYROPHOSPH_2"/>
    <property type="match status" value="1"/>
</dbReference>
<dbReference type="PROSITE" id="PS00810">
    <property type="entry name" value="ADP_GLC_PYROPHOSPH_3"/>
    <property type="match status" value="1"/>
</dbReference>
<feature type="chain" id="PRO_1000147238" description="Glucose-1-phosphate adenylyltransferase">
    <location>
        <begin position="1"/>
        <end position="380"/>
    </location>
</feature>
<feature type="binding site" evidence="1">
    <location>
        <position position="164"/>
    </location>
    <ligand>
        <name>alpha-D-glucose 1-phosphate</name>
        <dbReference type="ChEBI" id="CHEBI:58601"/>
    </ligand>
</feature>
<feature type="binding site" evidence="1">
    <location>
        <begin position="179"/>
        <end position="180"/>
    </location>
    <ligand>
        <name>alpha-D-glucose 1-phosphate</name>
        <dbReference type="ChEBI" id="CHEBI:58601"/>
    </ligand>
</feature>
<feature type="binding site" evidence="1">
    <location>
        <position position="190"/>
    </location>
    <ligand>
        <name>alpha-D-glucose 1-phosphate</name>
        <dbReference type="ChEBI" id="CHEBI:58601"/>
    </ligand>
</feature>
<accession>C1CEA8</accession>
<sequence length="380" mass="41491">MKNEMLALILAGGQGTRLGKLTQSIAKPAVQFGGRYRIIDFALSNCANSGIHNVGVVTQYQPLALNNHIGNGSSWGLDGINSGVSILQPYSASEGNRWFEGTSHAIYQNIDYIDSVNPEYVLILSGDHIYKMDYDDMLQSHKDNNASLTVAVLDVPLKEASRFGIMNTDANNRIVEFEEKPAQPKSTKASMGIYIFDWQRLRNMLVAAEKSKVGMSDFGKNVIPNYLESGESVYAYEFSGYWKDVGTIESLWEANMEYISPENALDSRNRQWKIYSRNLISPPNFLGANAHVEDSLVVDGCFVDGTVKHSILSTGAQVREGAEVLDSVIMSGAIIGQGAKIKRAIIGEGAIISDGVEIDGTDEVQVVGYNEVVGVATDED</sequence>